<accession>Q92Q52</accession>
<gene>
    <name evidence="1" type="primary">frr</name>
    <name type="synonym">rrf</name>
    <name type="ordered locus">R01498</name>
    <name type="ORF">SMc02098</name>
</gene>
<keyword id="KW-0963">Cytoplasm</keyword>
<keyword id="KW-0648">Protein biosynthesis</keyword>
<keyword id="KW-1185">Reference proteome</keyword>
<comment type="function">
    <text evidence="1">Responsible for the release of ribosomes from messenger RNA at the termination of protein biosynthesis. May increase the efficiency of translation by recycling ribosomes from one round of translation to another.</text>
</comment>
<comment type="subcellular location">
    <subcellularLocation>
        <location evidence="1">Cytoplasm</location>
    </subcellularLocation>
</comment>
<comment type="similarity">
    <text evidence="1">Belongs to the RRF family.</text>
</comment>
<proteinExistence type="inferred from homology"/>
<sequence>MSEGVDLKELKRRMDGAIAAFKHDIASLRTGRASANVLDPVTVEAYGSRMPLNQVANITVPESRMLSVSVWDKSMVGAVERAIRESNLGLNPIVDGQNLRIPLPELNEERRKSLVKVAHDYAEKSKVAVRHVRRDGMDDLKKAEKDGEIGQDESRAQSERVQKMTDDVISEIDRLLAEKEKEIMQV</sequence>
<organism>
    <name type="scientific">Rhizobium meliloti (strain 1021)</name>
    <name type="common">Ensifer meliloti</name>
    <name type="synonym">Sinorhizobium meliloti</name>
    <dbReference type="NCBI Taxonomy" id="266834"/>
    <lineage>
        <taxon>Bacteria</taxon>
        <taxon>Pseudomonadati</taxon>
        <taxon>Pseudomonadota</taxon>
        <taxon>Alphaproteobacteria</taxon>
        <taxon>Hyphomicrobiales</taxon>
        <taxon>Rhizobiaceae</taxon>
        <taxon>Sinorhizobium/Ensifer group</taxon>
        <taxon>Sinorhizobium</taxon>
    </lineage>
</organism>
<name>RRF_RHIME</name>
<dbReference type="EMBL" id="AL591688">
    <property type="protein sequence ID" value="CAC46077.1"/>
    <property type="molecule type" value="Genomic_DNA"/>
</dbReference>
<dbReference type="RefSeq" id="NP_385604.1">
    <property type="nucleotide sequence ID" value="NC_003047.1"/>
</dbReference>
<dbReference type="RefSeq" id="WP_003534987.1">
    <property type="nucleotide sequence ID" value="NC_003047.1"/>
</dbReference>
<dbReference type="SMR" id="Q92Q52"/>
<dbReference type="EnsemblBacteria" id="CAC46077">
    <property type="protein sequence ID" value="CAC46077"/>
    <property type="gene ID" value="SMc02098"/>
</dbReference>
<dbReference type="GeneID" id="89575822"/>
<dbReference type="KEGG" id="sme:SMc02098"/>
<dbReference type="PATRIC" id="fig|266834.11.peg.2918"/>
<dbReference type="eggNOG" id="COG0233">
    <property type="taxonomic scope" value="Bacteria"/>
</dbReference>
<dbReference type="HOGENOM" id="CLU_073981_2_0_5"/>
<dbReference type="OrthoDB" id="9804006at2"/>
<dbReference type="Proteomes" id="UP000001976">
    <property type="component" value="Chromosome"/>
</dbReference>
<dbReference type="GO" id="GO:0005829">
    <property type="term" value="C:cytosol"/>
    <property type="evidence" value="ECO:0007669"/>
    <property type="project" value="GOC"/>
</dbReference>
<dbReference type="GO" id="GO:0043023">
    <property type="term" value="F:ribosomal large subunit binding"/>
    <property type="evidence" value="ECO:0007669"/>
    <property type="project" value="TreeGrafter"/>
</dbReference>
<dbReference type="GO" id="GO:0002184">
    <property type="term" value="P:cytoplasmic translational termination"/>
    <property type="evidence" value="ECO:0007669"/>
    <property type="project" value="TreeGrafter"/>
</dbReference>
<dbReference type="CDD" id="cd00520">
    <property type="entry name" value="RRF"/>
    <property type="match status" value="1"/>
</dbReference>
<dbReference type="FunFam" id="1.10.132.20:FF:000001">
    <property type="entry name" value="Ribosome-recycling factor"/>
    <property type="match status" value="1"/>
</dbReference>
<dbReference type="FunFam" id="3.30.1360.40:FF:000001">
    <property type="entry name" value="Ribosome-recycling factor"/>
    <property type="match status" value="1"/>
</dbReference>
<dbReference type="Gene3D" id="3.30.1360.40">
    <property type="match status" value="1"/>
</dbReference>
<dbReference type="Gene3D" id="1.10.132.20">
    <property type="entry name" value="Ribosome-recycling factor"/>
    <property type="match status" value="1"/>
</dbReference>
<dbReference type="HAMAP" id="MF_00040">
    <property type="entry name" value="RRF"/>
    <property type="match status" value="1"/>
</dbReference>
<dbReference type="InterPro" id="IPR002661">
    <property type="entry name" value="Ribosome_recyc_fac"/>
</dbReference>
<dbReference type="InterPro" id="IPR023584">
    <property type="entry name" value="Ribosome_recyc_fac_dom"/>
</dbReference>
<dbReference type="InterPro" id="IPR036191">
    <property type="entry name" value="RRF_sf"/>
</dbReference>
<dbReference type="NCBIfam" id="TIGR00496">
    <property type="entry name" value="frr"/>
    <property type="match status" value="1"/>
</dbReference>
<dbReference type="PANTHER" id="PTHR20982:SF3">
    <property type="entry name" value="MITOCHONDRIAL RIBOSOME RECYCLING FACTOR PSEUDO 1"/>
    <property type="match status" value="1"/>
</dbReference>
<dbReference type="PANTHER" id="PTHR20982">
    <property type="entry name" value="RIBOSOME RECYCLING FACTOR"/>
    <property type="match status" value="1"/>
</dbReference>
<dbReference type="Pfam" id="PF01765">
    <property type="entry name" value="RRF"/>
    <property type="match status" value="1"/>
</dbReference>
<dbReference type="SUPFAM" id="SSF55194">
    <property type="entry name" value="Ribosome recycling factor, RRF"/>
    <property type="match status" value="1"/>
</dbReference>
<reference key="1">
    <citation type="journal article" date="2001" name="Proc. Natl. Acad. Sci. U.S.A.">
        <title>Analysis of the chromosome sequence of the legume symbiont Sinorhizobium meliloti strain 1021.</title>
        <authorList>
            <person name="Capela D."/>
            <person name="Barloy-Hubler F."/>
            <person name="Gouzy J."/>
            <person name="Bothe G."/>
            <person name="Ampe F."/>
            <person name="Batut J."/>
            <person name="Boistard P."/>
            <person name="Becker A."/>
            <person name="Boutry M."/>
            <person name="Cadieu E."/>
            <person name="Dreano S."/>
            <person name="Gloux S."/>
            <person name="Godrie T."/>
            <person name="Goffeau A."/>
            <person name="Kahn D."/>
            <person name="Kiss E."/>
            <person name="Lelaure V."/>
            <person name="Masuy D."/>
            <person name="Pohl T."/>
            <person name="Portetelle D."/>
            <person name="Puehler A."/>
            <person name="Purnelle B."/>
            <person name="Ramsperger U."/>
            <person name="Renard C."/>
            <person name="Thebault P."/>
            <person name="Vandenbol M."/>
            <person name="Weidner S."/>
            <person name="Galibert F."/>
        </authorList>
    </citation>
    <scope>NUCLEOTIDE SEQUENCE [LARGE SCALE GENOMIC DNA]</scope>
    <source>
        <strain>1021</strain>
    </source>
</reference>
<reference key="2">
    <citation type="journal article" date="2001" name="Science">
        <title>The composite genome of the legume symbiont Sinorhizobium meliloti.</title>
        <authorList>
            <person name="Galibert F."/>
            <person name="Finan T.M."/>
            <person name="Long S.R."/>
            <person name="Puehler A."/>
            <person name="Abola P."/>
            <person name="Ampe F."/>
            <person name="Barloy-Hubler F."/>
            <person name="Barnett M.J."/>
            <person name="Becker A."/>
            <person name="Boistard P."/>
            <person name="Bothe G."/>
            <person name="Boutry M."/>
            <person name="Bowser L."/>
            <person name="Buhrmester J."/>
            <person name="Cadieu E."/>
            <person name="Capela D."/>
            <person name="Chain P."/>
            <person name="Cowie A."/>
            <person name="Davis R.W."/>
            <person name="Dreano S."/>
            <person name="Federspiel N.A."/>
            <person name="Fisher R.F."/>
            <person name="Gloux S."/>
            <person name="Godrie T."/>
            <person name="Goffeau A."/>
            <person name="Golding B."/>
            <person name="Gouzy J."/>
            <person name="Gurjal M."/>
            <person name="Hernandez-Lucas I."/>
            <person name="Hong A."/>
            <person name="Huizar L."/>
            <person name="Hyman R.W."/>
            <person name="Jones T."/>
            <person name="Kahn D."/>
            <person name="Kahn M.L."/>
            <person name="Kalman S."/>
            <person name="Keating D.H."/>
            <person name="Kiss E."/>
            <person name="Komp C."/>
            <person name="Lelaure V."/>
            <person name="Masuy D."/>
            <person name="Palm C."/>
            <person name="Peck M.C."/>
            <person name="Pohl T.M."/>
            <person name="Portetelle D."/>
            <person name="Purnelle B."/>
            <person name="Ramsperger U."/>
            <person name="Surzycki R."/>
            <person name="Thebault P."/>
            <person name="Vandenbol M."/>
            <person name="Vorhoelter F.J."/>
            <person name="Weidner S."/>
            <person name="Wells D.H."/>
            <person name="Wong K."/>
            <person name="Yeh K.-C."/>
            <person name="Batut J."/>
        </authorList>
    </citation>
    <scope>NUCLEOTIDE SEQUENCE [LARGE SCALE GENOMIC DNA]</scope>
    <source>
        <strain>1021</strain>
    </source>
</reference>
<protein>
    <recommendedName>
        <fullName evidence="1">Ribosome-recycling factor</fullName>
        <shortName evidence="1">RRF</shortName>
    </recommendedName>
    <alternativeName>
        <fullName evidence="1">Ribosome-releasing factor</fullName>
    </alternativeName>
</protein>
<feature type="chain" id="PRO_0000167524" description="Ribosome-recycling factor">
    <location>
        <begin position="1"/>
        <end position="186"/>
    </location>
</feature>
<feature type="region of interest" description="Disordered" evidence="2">
    <location>
        <begin position="135"/>
        <end position="164"/>
    </location>
</feature>
<evidence type="ECO:0000255" key="1">
    <source>
        <dbReference type="HAMAP-Rule" id="MF_00040"/>
    </source>
</evidence>
<evidence type="ECO:0000256" key="2">
    <source>
        <dbReference type="SAM" id="MobiDB-lite"/>
    </source>
</evidence>